<organism>
    <name type="scientific">Shigella sonnei (strain Ss046)</name>
    <dbReference type="NCBI Taxonomy" id="300269"/>
    <lineage>
        <taxon>Bacteria</taxon>
        <taxon>Pseudomonadati</taxon>
        <taxon>Pseudomonadota</taxon>
        <taxon>Gammaproteobacteria</taxon>
        <taxon>Enterobacterales</taxon>
        <taxon>Enterobacteriaceae</taxon>
        <taxon>Shigella</taxon>
    </lineage>
</organism>
<protein>
    <recommendedName>
        <fullName evidence="1">tRNA dimethylallyltransferase</fullName>
        <ecNumber evidence="1">2.5.1.75</ecNumber>
    </recommendedName>
    <alternativeName>
        <fullName evidence="1">Dimethylallyl diphosphate:tRNA dimethylallyltransferase</fullName>
        <shortName evidence="1">DMAPP:tRNA dimethylallyltransferase</shortName>
        <shortName evidence="1">DMATase</shortName>
    </alternativeName>
    <alternativeName>
        <fullName evidence="1">Isopentenyl-diphosphate:tRNA isopentenyltransferase</fullName>
        <shortName evidence="1">IPP transferase</shortName>
        <shortName evidence="1">IPPT</shortName>
        <shortName evidence="1">IPTase</shortName>
    </alternativeName>
</protein>
<proteinExistence type="inferred from homology"/>
<feature type="chain" id="PRO_1000020660" description="tRNA dimethylallyltransferase">
    <location>
        <begin position="1"/>
        <end position="316"/>
    </location>
</feature>
<feature type="region of interest" description="Interaction with substrate tRNA" evidence="1">
    <location>
        <begin position="42"/>
        <end position="45"/>
    </location>
</feature>
<feature type="region of interest" description="Interaction with substrate tRNA" evidence="1">
    <location>
        <begin position="166"/>
        <end position="170"/>
    </location>
</feature>
<feature type="region of interest" description="Interaction with substrate tRNA" evidence="1">
    <location>
        <begin position="247"/>
        <end position="252"/>
    </location>
</feature>
<feature type="region of interest" description="Interaction with substrate tRNA" evidence="1">
    <location>
        <begin position="280"/>
        <end position="287"/>
    </location>
</feature>
<feature type="binding site" evidence="1">
    <location>
        <begin position="17"/>
        <end position="24"/>
    </location>
    <ligand>
        <name>ATP</name>
        <dbReference type="ChEBI" id="CHEBI:30616"/>
    </ligand>
</feature>
<feature type="binding site" evidence="1">
    <location>
        <begin position="19"/>
        <end position="24"/>
    </location>
    <ligand>
        <name>substrate</name>
    </ligand>
</feature>
<feature type="site" description="Interaction with substrate tRNA" evidence="1">
    <location>
        <position position="108"/>
    </location>
</feature>
<feature type="site" description="Interaction with substrate tRNA" evidence="1">
    <location>
        <position position="130"/>
    </location>
</feature>
<sequence length="316" mass="35065">MSDISKASLPKAIFLMGPTASGKTALAIELRKILPVELISVDSALIYKGMDIGTAKPNAEELLAAPHRLLDIRDPSQAYSAADFRRDALAEMADITAAGRIPLLVGGTMLYFKALLEGLSPLPSADPEVRARIEQQAAEQGWESLHRQLQEVDPVAAARIHPNDPQRLSRALEVFFISGKTLTELTQTSGDALPYQVHQFAIAPASRELLHQRIEQRFHQMLASGFEAEVRALFARGDLHTDLPSIRCVGYRQMWSYLEGEISYDEMVYRGVCATRQLAKRQITWLRGWEGVHWLDSEKPEQARDEVLQVVGAIAG</sequence>
<gene>
    <name evidence="1" type="primary">miaA</name>
    <name type="ordered locus">SSON_4356</name>
</gene>
<evidence type="ECO:0000255" key="1">
    <source>
        <dbReference type="HAMAP-Rule" id="MF_00185"/>
    </source>
</evidence>
<keyword id="KW-0067">ATP-binding</keyword>
<keyword id="KW-0460">Magnesium</keyword>
<keyword id="KW-0547">Nucleotide-binding</keyword>
<keyword id="KW-1185">Reference proteome</keyword>
<keyword id="KW-0808">Transferase</keyword>
<keyword id="KW-0819">tRNA processing</keyword>
<dbReference type="EC" id="2.5.1.75" evidence="1"/>
<dbReference type="EMBL" id="CP000038">
    <property type="protein sequence ID" value="AAZ90840.1"/>
    <property type="molecule type" value="Genomic_DNA"/>
</dbReference>
<dbReference type="RefSeq" id="WP_001280345.1">
    <property type="nucleotide sequence ID" value="NC_007384.1"/>
</dbReference>
<dbReference type="SMR" id="Q3YUH2"/>
<dbReference type="GeneID" id="93777650"/>
<dbReference type="KEGG" id="ssn:SSON_4356"/>
<dbReference type="HOGENOM" id="CLU_032616_0_0_6"/>
<dbReference type="Proteomes" id="UP000002529">
    <property type="component" value="Chromosome"/>
</dbReference>
<dbReference type="GO" id="GO:0005524">
    <property type="term" value="F:ATP binding"/>
    <property type="evidence" value="ECO:0007669"/>
    <property type="project" value="UniProtKB-UniRule"/>
</dbReference>
<dbReference type="GO" id="GO:0052381">
    <property type="term" value="F:tRNA dimethylallyltransferase activity"/>
    <property type="evidence" value="ECO:0007669"/>
    <property type="project" value="UniProtKB-UniRule"/>
</dbReference>
<dbReference type="GO" id="GO:0006400">
    <property type="term" value="P:tRNA modification"/>
    <property type="evidence" value="ECO:0007669"/>
    <property type="project" value="TreeGrafter"/>
</dbReference>
<dbReference type="FunFam" id="1.10.20.140:FF:000001">
    <property type="entry name" value="tRNA dimethylallyltransferase"/>
    <property type="match status" value="1"/>
</dbReference>
<dbReference type="FunFam" id="1.10.287.890:FF:000001">
    <property type="entry name" value="tRNA dimethylallyltransferase"/>
    <property type="match status" value="1"/>
</dbReference>
<dbReference type="Gene3D" id="1.10.20.140">
    <property type="match status" value="1"/>
</dbReference>
<dbReference type="Gene3D" id="1.10.287.890">
    <property type="entry name" value="Crystal structure of tRNA isopentenylpyrophosphate transferase (bh2366) domain"/>
    <property type="match status" value="1"/>
</dbReference>
<dbReference type="Gene3D" id="3.40.50.300">
    <property type="entry name" value="P-loop containing nucleotide triphosphate hydrolases"/>
    <property type="match status" value="1"/>
</dbReference>
<dbReference type="HAMAP" id="MF_00185">
    <property type="entry name" value="IPP_trans"/>
    <property type="match status" value="1"/>
</dbReference>
<dbReference type="InterPro" id="IPR039657">
    <property type="entry name" value="Dimethylallyltransferase"/>
</dbReference>
<dbReference type="InterPro" id="IPR018022">
    <property type="entry name" value="IPT"/>
</dbReference>
<dbReference type="InterPro" id="IPR027417">
    <property type="entry name" value="P-loop_NTPase"/>
</dbReference>
<dbReference type="NCBIfam" id="TIGR00174">
    <property type="entry name" value="miaA"/>
    <property type="match status" value="1"/>
</dbReference>
<dbReference type="PANTHER" id="PTHR11088">
    <property type="entry name" value="TRNA DIMETHYLALLYLTRANSFERASE"/>
    <property type="match status" value="1"/>
</dbReference>
<dbReference type="PANTHER" id="PTHR11088:SF60">
    <property type="entry name" value="TRNA DIMETHYLALLYLTRANSFERASE"/>
    <property type="match status" value="1"/>
</dbReference>
<dbReference type="Pfam" id="PF01715">
    <property type="entry name" value="IPPT"/>
    <property type="match status" value="1"/>
</dbReference>
<dbReference type="SUPFAM" id="SSF52540">
    <property type="entry name" value="P-loop containing nucleoside triphosphate hydrolases"/>
    <property type="match status" value="1"/>
</dbReference>
<accession>Q3YUH2</accession>
<name>MIAA_SHISS</name>
<comment type="function">
    <text evidence="1">Catalyzes the transfer of a dimethylallyl group onto the adenine at position 37 in tRNAs that read codons beginning with uridine, leading to the formation of N6-(dimethylallyl)adenosine (i(6)A).</text>
</comment>
<comment type="catalytic activity">
    <reaction evidence="1">
        <text>adenosine(37) in tRNA + dimethylallyl diphosphate = N(6)-dimethylallyladenosine(37) in tRNA + diphosphate</text>
        <dbReference type="Rhea" id="RHEA:26482"/>
        <dbReference type="Rhea" id="RHEA-COMP:10162"/>
        <dbReference type="Rhea" id="RHEA-COMP:10375"/>
        <dbReference type="ChEBI" id="CHEBI:33019"/>
        <dbReference type="ChEBI" id="CHEBI:57623"/>
        <dbReference type="ChEBI" id="CHEBI:74411"/>
        <dbReference type="ChEBI" id="CHEBI:74415"/>
        <dbReference type="EC" id="2.5.1.75"/>
    </reaction>
</comment>
<comment type="cofactor">
    <cofactor evidence="1">
        <name>Mg(2+)</name>
        <dbReference type="ChEBI" id="CHEBI:18420"/>
    </cofactor>
</comment>
<comment type="subunit">
    <text evidence="1">Monomer.</text>
</comment>
<comment type="similarity">
    <text evidence="1">Belongs to the IPP transferase family.</text>
</comment>
<reference key="1">
    <citation type="journal article" date="2005" name="Nucleic Acids Res.">
        <title>Genome dynamics and diversity of Shigella species, the etiologic agents of bacillary dysentery.</title>
        <authorList>
            <person name="Yang F."/>
            <person name="Yang J."/>
            <person name="Zhang X."/>
            <person name="Chen L."/>
            <person name="Jiang Y."/>
            <person name="Yan Y."/>
            <person name="Tang X."/>
            <person name="Wang J."/>
            <person name="Xiong Z."/>
            <person name="Dong J."/>
            <person name="Xue Y."/>
            <person name="Zhu Y."/>
            <person name="Xu X."/>
            <person name="Sun L."/>
            <person name="Chen S."/>
            <person name="Nie H."/>
            <person name="Peng J."/>
            <person name="Xu J."/>
            <person name="Wang Y."/>
            <person name="Yuan Z."/>
            <person name="Wen Y."/>
            <person name="Yao Z."/>
            <person name="Shen Y."/>
            <person name="Qiang B."/>
            <person name="Hou Y."/>
            <person name="Yu J."/>
            <person name="Jin Q."/>
        </authorList>
    </citation>
    <scope>NUCLEOTIDE SEQUENCE [LARGE SCALE GENOMIC DNA]</scope>
    <source>
        <strain>Ss046</strain>
    </source>
</reference>